<evidence type="ECO:0000250" key="1">
    <source>
        <dbReference type="UniProtKB" id="Q5FVN1"/>
    </source>
</evidence>
<evidence type="ECO:0000250" key="2">
    <source>
        <dbReference type="UniProtKB" id="Q8C7E7"/>
    </source>
</evidence>
<evidence type="ECO:0000255" key="3"/>
<evidence type="ECO:0000255" key="4">
    <source>
        <dbReference type="PROSITE-ProRule" id="PRU00594"/>
    </source>
</evidence>
<evidence type="ECO:0000256" key="5">
    <source>
        <dbReference type="SAM" id="MobiDB-lite"/>
    </source>
</evidence>
<evidence type="ECO:0000269" key="6">
    <source>
    </source>
</evidence>
<evidence type="ECO:0000269" key="7">
    <source>
    </source>
</evidence>
<evidence type="ECO:0000269" key="8">
    <source>
    </source>
</evidence>
<evidence type="ECO:0000269" key="9">
    <source>
    </source>
</evidence>
<evidence type="ECO:0000303" key="10">
    <source>
    </source>
</evidence>
<evidence type="ECO:0000305" key="11"/>
<evidence type="ECO:0000305" key="12">
    <source>
    </source>
</evidence>
<evidence type="ECO:0000305" key="13">
    <source>
    </source>
</evidence>
<evidence type="ECO:0007744" key="14">
    <source>
    </source>
</evidence>
<evidence type="ECO:0007744" key="15">
    <source>
    </source>
</evidence>
<proteinExistence type="evidence at protein level"/>
<keyword id="KW-0002">3D-structure</keyword>
<keyword id="KW-0072">Autophagy</keyword>
<keyword id="KW-0119">Carbohydrate metabolism</keyword>
<keyword id="KW-1003">Cell membrane</keyword>
<keyword id="KW-0256">Endoplasmic reticulum</keyword>
<keyword id="KW-0321">Glycogen metabolism</keyword>
<keyword id="KW-0472">Membrane</keyword>
<keyword id="KW-0597">Phosphoprotein</keyword>
<keyword id="KW-1267">Proteomics identification</keyword>
<keyword id="KW-1185">Reference proteome</keyword>
<keyword id="KW-0735">Signal-anchor</keyword>
<keyword id="KW-0812">Transmembrane</keyword>
<keyword id="KW-1133">Transmembrane helix</keyword>
<keyword id="KW-0832">Ubl conjugation</keyword>
<accession>O95210</accession>
<accession>B3KVZ9</accession>
<protein>
    <recommendedName>
        <fullName evidence="10">Starch-binding domain-containing protein 1</fullName>
    </recommendedName>
    <alternativeName>
        <fullName evidence="10">Genethonin-1</fullName>
    </alternativeName>
    <alternativeName>
        <fullName evidence="11">Glycophagy cargo receptor STBD1</fullName>
    </alternativeName>
</protein>
<organism>
    <name type="scientific">Homo sapiens</name>
    <name type="common">Human</name>
    <dbReference type="NCBI Taxonomy" id="9606"/>
    <lineage>
        <taxon>Eukaryota</taxon>
        <taxon>Metazoa</taxon>
        <taxon>Chordata</taxon>
        <taxon>Craniata</taxon>
        <taxon>Vertebrata</taxon>
        <taxon>Euteleostomi</taxon>
        <taxon>Mammalia</taxon>
        <taxon>Eutheria</taxon>
        <taxon>Euarchontoglires</taxon>
        <taxon>Primates</taxon>
        <taxon>Haplorrhini</taxon>
        <taxon>Catarrhini</taxon>
        <taxon>Hominidae</taxon>
        <taxon>Homo</taxon>
    </lineage>
</organism>
<gene>
    <name evidence="10" type="primary">STBD1</name>
    <name type="ORF">GENX-3414</name>
</gene>
<reference key="1">
    <citation type="journal article" date="1998" name="Biochem. J.">
        <title>Molecular cloning and functional expression of a novel human gene encoding two 41-43 kDa skeletal muscle internal membrane proteins.</title>
        <authorList>
            <person name="Bouju S."/>
            <person name="Lignon M.-F."/>
            <person name="Pietu G."/>
            <person name="Le Cunff M."/>
            <person name="Leger J.-J."/>
            <person name="Auffray C."/>
            <person name="Dechesne C.A."/>
        </authorList>
    </citation>
    <scope>NUCLEOTIDE SEQUENCE [MRNA]</scope>
    <scope>TISSUE SPECIFICITY</scope>
    <scope>SUBCELLULAR LOCATION</scope>
    <source>
        <tissue>Muscle</tissue>
    </source>
</reference>
<reference key="2">
    <citation type="journal article" date="2004" name="Nat. Genet.">
        <title>Complete sequencing and characterization of 21,243 full-length human cDNAs.</title>
        <authorList>
            <person name="Ota T."/>
            <person name="Suzuki Y."/>
            <person name="Nishikawa T."/>
            <person name="Otsuki T."/>
            <person name="Sugiyama T."/>
            <person name="Irie R."/>
            <person name="Wakamatsu A."/>
            <person name="Hayashi K."/>
            <person name="Sato H."/>
            <person name="Nagai K."/>
            <person name="Kimura K."/>
            <person name="Makita H."/>
            <person name="Sekine M."/>
            <person name="Obayashi M."/>
            <person name="Nishi T."/>
            <person name="Shibahara T."/>
            <person name="Tanaka T."/>
            <person name="Ishii S."/>
            <person name="Yamamoto J."/>
            <person name="Saito K."/>
            <person name="Kawai Y."/>
            <person name="Isono Y."/>
            <person name="Nakamura Y."/>
            <person name="Nagahari K."/>
            <person name="Murakami K."/>
            <person name="Yasuda T."/>
            <person name="Iwayanagi T."/>
            <person name="Wagatsuma M."/>
            <person name="Shiratori A."/>
            <person name="Sudo H."/>
            <person name="Hosoiri T."/>
            <person name="Kaku Y."/>
            <person name="Kodaira H."/>
            <person name="Kondo H."/>
            <person name="Sugawara M."/>
            <person name="Takahashi M."/>
            <person name="Kanda K."/>
            <person name="Yokoi T."/>
            <person name="Furuya T."/>
            <person name="Kikkawa E."/>
            <person name="Omura Y."/>
            <person name="Abe K."/>
            <person name="Kamihara K."/>
            <person name="Katsuta N."/>
            <person name="Sato K."/>
            <person name="Tanikawa M."/>
            <person name="Yamazaki M."/>
            <person name="Ninomiya K."/>
            <person name="Ishibashi T."/>
            <person name="Yamashita H."/>
            <person name="Murakawa K."/>
            <person name="Fujimori K."/>
            <person name="Tanai H."/>
            <person name="Kimata M."/>
            <person name="Watanabe M."/>
            <person name="Hiraoka S."/>
            <person name="Chiba Y."/>
            <person name="Ishida S."/>
            <person name="Ono Y."/>
            <person name="Takiguchi S."/>
            <person name="Watanabe S."/>
            <person name="Yosida M."/>
            <person name="Hotuta T."/>
            <person name="Kusano J."/>
            <person name="Kanehori K."/>
            <person name="Takahashi-Fujii A."/>
            <person name="Hara H."/>
            <person name="Tanase T.-O."/>
            <person name="Nomura Y."/>
            <person name="Togiya S."/>
            <person name="Komai F."/>
            <person name="Hara R."/>
            <person name="Takeuchi K."/>
            <person name="Arita M."/>
            <person name="Imose N."/>
            <person name="Musashino K."/>
            <person name="Yuuki H."/>
            <person name="Oshima A."/>
            <person name="Sasaki N."/>
            <person name="Aotsuka S."/>
            <person name="Yoshikawa Y."/>
            <person name="Matsunawa H."/>
            <person name="Ichihara T."/>
            <person name="Shiohata N."/>
            <person name="Sano S."/>
            <person name="Moriya S."/>
            <person name="Momiyama H."/>
            <person name="Satoh N."/>
            <person name="Takami S."/>
            <person name="Terashima Y."/>
            <person name="Suzuki O."/>
            <person name="Nakagawa S."/>
            <person name="Senoh A."/>
            <person name="Mizoguchi H."/>
            <person name="Goto Y."/>
            <person name="Shimizu F."/>
            <person name="Wakebe H."/>
            <person name="Hishigaki H."/>
            <person name="Watanabe T."/>
            <person name="Sugiyama A."/>
            <person name="Takemoto M."/>
            <person name="Kawakami B."/>
            <person name="Yamazaki M."/>
            <person name="Watanabe K."/>
            <person name="Kumagai A."/>
            <person name="Itakura S."/>
            <person name="Fukuzumi Y."/>
            <person name="Fujimori Y."/>
            <person name="Komiyama M."/>
            <person name="Tashiro H."/>
            <person name="Tanigami A."/>
            <person name="Fujiwara T."/>
            <person name="Ono T."/>
            <person name="Yamada K."/>
            <person name="Fujii Y."/>
            <person name="Ozaki K."/>
            <person name="Hirao M."/>
            <person name="Ohmori Y."/>
            <person name="Kawabata A."/>
            <person name="Hikiji T."/>
            <person name="Kobatake N."/>
            <person name="Inagaki H."/>
            <person name="Ikema Y."/>
            <person name="Okamoto S."/>
            <person name="Okitani R."/>
            <person name="Kawakami T."/>
            <person name="Noguchi S."/>
            <person name="Itoh T."/>
            <person name="Shigeta K."/>
            <person name="Senba T."/>
            <person name="Matsumura K."/>
            <person name="Nakajima Y."/>
            <person name="Mizuno T."/>
            <person name="Morinaga M."/>
            <person name="Sasaki M."/>
            <person name="Togashi T."/>
            <person name="Oyama M."/>
            <person name="Hata H."/>
            <person name="Watanabe M."/>
            <person name="Komatsu T."/>
            <person name="Mizushima-Sugano J."/>
            <person name="Satoh T."/>
            <person name="Shirai Y."/>
            <person name="Takahashi Y."/>
            <person name="Nakagawa K."/>
            <person name="Okumura K."/>
            <person name="Nagase T."/>
            <person name="Nomura N."/>
            <person name="Kikuchi H."/>
            <person name="Masuho Y."/>
            <person name="Yamashita R."/>
            <person name="Nakai K."/>
            <person name="Yada T."/>
            <person name="Nakamura Y."/>
            <person name="Ohara O."/>
            <person name="Isogai T."/>
            <person name="Sugano S."/>
        </authorList>
    </citation>
    <scope>NUCLEOTIDE SEQUENCE [LARGE SCALE MRNA]</scope>
</reference>
<reference key="3">
    <citation type="submission" date="2005-07" db="EMBL/GenBank/DDBJ databases">
        <authorList>
            <person name="Mural R.J."/>
            <person name="Istrail S."/>
            <person name="Sutton G.G."/>
            <person name="Florea L."/>
            <person name="Halpern A.L."/>
            <person name="Mobarry C.M."/>
            <person name="Lippert R."/>
            <person name="Walenz B."/>
            <person name="Shatkay H."/>
            <person name="Dew I."/>
            <person name="Miller J.R."/>
            <person name="Flanigan M.J."/>
            <person name="Edwards N.J."/>
            <person name="Bolanos R."/>
            <person name="Fasulo D."/>
            <person name="Halldorsson B.V."/>
            <person name="Hannenhalli S."/>
            <person name="Turner R."/>
            <person name="Yooseph S."/>
            <person name="Lu F."/>
            <person name="Nusskern D.R."/>
            <person name="Shue B.C."/>
            <person name="Zheng X.H."/>
            <person name="Zhong F."/>
            <person name="Delcher A.L."/>
            <person name="Huson D.H."/>
            <person name="Kravitz S.A."/>
            <person name="Mouchard L."/>
            <person name="Reinert K."/>
            <person name="Remington K.A."/>
            <person name="Clark A.G."/>
            <person name="Waterman M.S."/>
            <person name="Eichler E.E."/>
            <person name="Adams M.D."/>
            <person name="Hunkapiller M.W."/>
            <person name="Myers E.W."/>
            <person name="Venter J.C."/>
        </authorList>
    </citation>
    <scope>NUCLEOTIDE SEQUENCE [LARGE SCALE GENOMIC DNA]</scope>
</reference>
<reference key="4">
    <citation type="journal article" date="2004" name="Genome Res.">
        <title>The status, quality, and expansion of the NIH full-length cDNA project: the Mammalian Gene Collection (MGC).</title>
        <authorList>
            <consortium name="The MGC Project Team"/>
        </authorList>
    </citation>
    <scope>NUCLEOTIDE SEQUENCE [LARGE SCALE MRNA]</scope>
    <source>
        <tissue>Lung</tissue>
    </source>
</reference>
<reference key="5">
    <citation type="journal article" date="2008" name="Proc. Natl. Acad. Sci. U.S.A.">
        <title>A quantitative atlas of mitotic phosphorylation.</title>
        <authorList>
            <person name="Dephoure N."/>
            <person name="Zhou C."/>
            <person name="Villen J."/>
            <person name="Beausoleil S.A."/>
            <person name="Bakalarski C.E."/>
            <person name="Elledge S.J."/>
            <person name="Gygi S.P."/>
        </authorList>
    </citation>
    <scope>PHOSPHORYLATION [LARGE SCALE ANALYSIS] AT SER-148</scope>
    <scope>IDENTIFICATION BY MASS SPECTROMETRY [LARGE SCALE ANALYSIS]</scope>
    <source>
        <tissue>Cervix carcinoma</tissue>
    </source>
</reference>
<reference key="6">
    <citation type="journal article" date="2010" name="J. Biol. Chem.">
        <title>Starch binding domain-containing protein 1/genethonin 1 is a novel participant in glycogen metabolism.</title>
        <authorList>
            <person name="Jiang S."/>
            <person name="Heller B."/>
            <person name="Tagliabracci V.S."/>
            <person name="Zhai L."/>
            <person name="Irimia J.M."/>
            <person name="DePaoli-Roach A.A."/>
            <person name="Wells C.D."/>
            <person name="Skurat A.V."/>
            <person name="Roach P.J."/>
        </authorList>
    </citation>
    <scope>INTERACTION WITH GABARAP AND GABARAPL1</scope>
    <scope>DOMAIN</scope>
    <scope>SUBCELLULAR LOCATION</scope>
    <scope>FUNCTION</scope>
    <scope>GLYCOGEN-BINDING</scope>
    <scope>MUTAGENESIS OF TRP-293</scope>
</reference>
<reference key="7">
    <citation type="journal article" date="2011" name="Biochem. Biophys. Res. Commun.">
        <title>Starch-binding domain-containing protein 1 (Stbd1) and glycogen metabolism: Identification of the Atg8 family interacting motif (AIM) in Stbd1 required for interaction with GABARAPL1.</title>
        <authorList>
            <person name="Jiang S."/>
            <person name="Wells C.D."/>
            <person name="Roach P.J."/>
        </authorList>
    </citation>
    <scope>INTERACTION WITH GABARAPL1</scope>
    <scope>DOMAIN</scope>
    <scope>MUTAGENESIS OF TRP-203 AND VAL-206</scope>
    <scope>SUBCELLULAR LOCATION</scope>
    <scope>FUNCTION</scope>
</reference>
<reference key="8">
    <citation type="journal article" date="2014" name="Biosci. Rep.">
        <title>The carbohydrate-binding domain of overexpressed STBD1 is important for its stability and protein-protein interactions.</title>
        <authorList>
            <person name="Zhu Y."/>
            <person name="Zhang M."/>
            <person name="Kelly A.R."/>
            <person name="Cheng A."/>
        </authorList>
    </citation>
    <scope>DOMAIN</scope>
    <scope>GLYCOGEN-BINDING</scope>
    <scope>MUTAGENESIS OF TRP-293</scope>
    <scope>UBIQUITINATION</scope>
    <scope>SUBCELLULAR LOCATION</scope>
    <scope>INTERACTION WITH GYS2; AGL; GBE1 AND EPM2A</scope>
    <scope>FUNCTION</scope>
</reference>
<reference key="9">
    <citation type="journal article" date="2014" name="J. Proteomics">
        <title>An enzyme assisted RP-RPLC approach for in-depth analysis of human liver phosphoproteome.</title>
        <authorList>
            <person name="Bian Y."/>
            <person name="Song C."/>
            <person name="Cheng K."/>
            <person name="Dong M."/>
            <person name="Wang F."/>
            <person name="Huang J."/>
            <person name="Sun D."/>
            <person name="Wang L."/>
            <person name="Ye M."/>
            <person name="Zou H."/>
        </authorList>
    </citation>
    <scope>PHOSPHORYLATION [LARGE SCALE ANALYSIS] AT SER-117; SER-188; SER-194; SER-210; SER-211 AND SER-220</scope>
    <scope>IDENTIFICATION BY MASS SPECTROMETRY [LARGE SCALE ANALYSIS]</scope>
    <source>
        <tissue>Liver</tissue>
    </source>
</reference>
<reference key="10">
    <citation type="journal article" date="2002" name="Bioinformatics">
        <title>A motif of a microbial starch-binding domain found in human genethonin.</title>
        <authorList>
            <person name="Janecek S."/>
        </authorList>
    </citation>
    <scope>3D-STRUCTURE MODELING OF 260-358</scope>
    <scope>PUTATIVE FUNCTION OF STARCH-BINDING DOMAIN</scope>
</reference>
<dbReference type="EMBL" id="AF062534">
    <property type="protein sequence ID" value="AAC78827.1"/>
    <property type="molecule type" value="mRNA"/>
</dbReference>
<dbReference type="EMBL" id="AK123795">
    <property type="protein sequence ID" value="BAG53961.1"/>
    <property type="molecule type" value="mRNA"/>
</dbReference>
<dbReference type="EMBL" id="CH471057">
    <property type="protein sequence ID" value="EAX05783.1"/>
    <property type="molecule type" value="Genomic_DNA"/>
</dbReference>
<dbReference type="EMBL" id="BC022301">
    <property type="protein sequence ID" value="AAH22301.1"/>
    <property type="molecule type" value="mRNA"/>
</dbReference>
<dbReference type="CCDS" id="CCDS3578.1"/>
<dbReference type="RefSeq" id="NP_003934.1">
    <property type="nucleotide sequence ID" value="NM_003943.5"/>
</dbReference>
<dbReference type="PDB" id="8X8A">
    <property type="method" value="X-ray"/>
    <property type="resolution" value="1.53 A"/>
    <property type="chains" value="B=200-210"/>
</dbReference>
<dbReference type="PDB" id="8X8K">
    <property type="method" value="X-ray"/>
    <property type="resolution" value="2.10 A"/>
    <property type="chains" value="A/B/C/D=260-358"/>
</dbReference>
<dbReference type="PDBsum" id="8X8A"/>
<dbReference type="PDBsum" id="8X8K"/>
<dbReference type="SMR" id="O95210"/>
<dbReference type="BioGRID" id="114469">
    <property type="interactions" value="143"/>
</dbReference>
<dbReference type="FunCoup" id="O95210">
    <property type="interactions" value="357"/>
</dbReference>
<dbReference type="IntAct" id="O95210">
    <property type="interactions" value="38"/>
</dbReference>
<dbReference type="MINT" id="O95210"/>
<dbReference type="STRING" id="9606.ENSP00000237642"/>
<dbReference type="CAZy" id="CBM20">
    <property type="family name" value="Carbohydrate-Binding Module Family 20"/>
</dbReference>
<dbReference type="TCDB" id="9.B.207.1.1">
    <property type="family name" value="the starch-binding domain-containing protein, stbd1 (stbd1) family"/>
</dbReference>
<dbReference type="GlyGen" id="O95210">
    <property type="glycosylation" value="2 sites, 1 O-linked glycan (2 sites)"/>
</dbReference>
<dbReference type="iPTMnet" id="O95210"/>
<dbReference type="PhosphoSitePlus" id="O95210"/>
<dbReference type="BioMuta" id="STBD1"/>
<dbReference type="jPOST" id="O95210"/>
<dbReference type="MassIVE" id="O95210"/>
<dbReference type="PaxDb" id="9606-ENSP00000237642"/>
<dbReference type="PeptideAtlas" id="O95210"/>
<dbReference type="ProteomicsDB" id="50720"/>
<dbReference type="Pumba" id="O95210"/>
<dbReference type="Antibodypedia" id="2375">
    <property type="antibodies" value="132 antibodies from 26 providers"/>
</dbReference>
<dbReference type="DNASU" id="8987"/>
<dbReference type="Ensembl" id="ENST00000237642.7">
    <property type="protein sequence ID" value="ENSP00000237642.6"/>
    <property type="gene ID" value="ENSG00000118804.9"/>
</dbReference>
<dbReference type="GeneID" id="8987"/>
<dbReference type="KEGG" id="hsa:8987"/>
<dbReference type="MANE-Select" id="ENST00000237642.7">
    <property type="protein sequence ID" value="ENSP00000237642.6"/>
    <property type="RefSeq nucleotide sequence ID" value="NM_003943.5"/>
    <property type="RefSeq protein sequence ID" value="NP_003934.1"/>
</dbReference>
<dbReference type="UCSC" id="uc003hka.4">
    <property type="organism name" value="human"/>
</dbReference>
<dbReference type="AGR" id="HGNC:24854"/>
<dbReference type="CTD" id="8987"/>
<dbReference type="DisGeNET" id="8987"/>
<dbReference type="GeneCards" id="STBD1"/>
<dbReference type="HGNC" id="HGNC:24854">
    <property type="gene designation" value="STBD1"/>
</dbReference>
<dbReference type="HPA" id="ENSG00000118804">
    <property type="expression patterns" value="Tissue enhanced (liver, skeletal muscle, tongue)"/>
</dbReference>
<dbReference type="MIM" id="607406">
    <property type="type" value="gene"/>
</dbReference>
<dbReference type="neXtProt" id="NX_O95210"/>
<dbReference type="OpenTargets" id="ENSG00000118804"/>
<dbReference type="PharmGKB" id="PA162405002"/>
<dbReference type="VEuPathDB" id="HostDB:ENSG00000118804"/>
<dbReference type="eggNOG" id="ENOG502SE11">
    <property type="taxonomic scope" value="Eukaryota"/>
</dbReference>
<dbReference type="GeneTree" id="ENSGT00390000007731"/>
<dbReference type="HOGENOM" id="CLU_070592_0_0_1"/>
<dbReference type="InParanoid" id="O95210"/>
<dbReference type="OMA" id="RADNEDW"/>
<dbReference type="OrthoDB" id="6123450at2759"/>
<dbReference type="PAN-GO" id="O95210">
    <property type="GO annotations" value="1 GO annotation based on evolutionary models"/>
</dbReference>
<dbReference type="PhylomeDB" id="O95210"/>
<dbReference type="TreeFam" id="TF338505"/>
<dbReference type="PathwayCommons" id="O95210"/>
<dbReference type="Reactome" id="R-HSA-6798695">
    <property type="pathway name" value="Neutrophil degranulation"/>
</dbReference>
<dbReference type="Reactome" id="R-HSA-8980692">
    <property type="pathway name" value="RHOA GTPase cycle"/>
</dbReference>
<dbReference type="Reactome" id="R-HSA-9013404">
    <property type="pathway name" value="RAC2 GTPase cycle"/>
</dbReference>
<dbReference type="Reactome" id="R-HSA-9013405">
    <property type="pathway name" value="RHOD GTPase cycle"/>
</dbReference>
<dbReference type="Reactome" id="R-HSA-9013408">
    <property type="pathway name" value="RHOG GTPase cycle"/>
</dbReference>
<dbReference type="Reactome" id="R-HSA-9013423">
    <property type="pathway name" value="RAC3 GTPase cycle"/>
</dbReference>
<dbReference type="SignaLink" id="O95210"/>
<dbReference type="BioGRID-ORCS" id="8987">
    <property type="hits" value="8 hits in 1020 CRISPR screens"/>
</dbReference>
<dbReference type="GenomeRNAi" id="8987"/>
<dbReference type="Pharos" id="O95210">
    <property type="development level" value="Tbio"/>
</dbReference>
<dbReference type="PRO" id="PR:O95210"/>
<dbReference type="Proteomes" id="UP000005640">
    <property type="component" value="Chromosome 4"/>
</dbReference>
<dbReference type="RNAct" id="O95210">
    <property type="molecule type" value="protein"/>
</dbReference>
<dbReference type="Bgee" id="ENSG00000118804">
    <property type="expression patterns" value="Expressed in gastrocnemius and 99 other cell types or tissues"/>
</dbReference>
<dbReference type="GO" id="GO:0005783">
    <property type="term" value="C:endoplasmic reticulum"/>
    <property type="evidence" value="ECO:0000314"/>
    <property type="project" value="ParkinsonsUK-UCL"/>
</dbReference>
<dbReference type="GO" id="GO:0005789">
    <property type="term" value="C:endoplasmic reticulum membrane"/>
    <property type="evidence" value="ECO:0007669"/>
    <property type="project" value="UniProtKB-SubCell"/>
</dbReference>
<dbReference type="GO" id="GO:0101003">
    <property type="term" value="C:ficolin-1-rich granule membrane"/>
    <property type="evidence" value="ECO:0000304"/>
    <property type="project" value="Reactome"/>
</dbReference>
<dbReference type="GO" id="GO:0016020">
    <property type="term" value="C:membrane"/>
    <property type="evidence" value="ECO:0000314"/>
    <property type="project" value="GO_Central"/>
</dbReference>
<dbReference type="GO" id="GO:0048471">
    <property type="term" value="C:perinuclear region of cytoplasm"/>
    <property type="evidence" value="ECO:0000314"/>
    <property type="project" value="GO_Central"/>
</dbReference>
<dbReference type="GO" id="GO:0034045">
    <property type="term" value="C:phagophore assembly site membrane"/>
    <property type="evidence" value="ECO:0007669"/>
    <property type="project" value="UniProtKB-SubCell"/>
</dbReference>
<dbReference type="GO" id="GO:0005886">
    <property type="term" value="C:plasma membrane"/>
    <property type="evidence" value="ECO:0000314"/>
    <property type="project" value="ParkinsonsUK-UCL"/>
</dbReference>
<dbReference type="GO" id="GO:0030315">
    <property type="term" value="C:T-tubule"/>
    <property type="evidence" value="ECO:0000314"/>
    <property type="project" value="ParkinsonsUK-UCL"/>
</dbReference>
<dbReference type="GO" id="GO:0070821">
    <property type="term" value="C:tertiary granule membrane"/>
    <property type="evidence" value="ECO:0000304"/>
    <property type="project" value="Reactome"/>
</dbReference>
<dbReference type="GO" id="GO:0038024">
    <property type="term" value="F:cargo receptor activity"/>
    <property type="evidence" value="ECO:0007669"/>
    <property type="project" value="Ensembl"/>
</dbReference>
<dbReference type="GO" id="GO:0019899">
    <property type="term" value="F:enzyme binding"/>
    <property type="evidence" value="ECO:0000353"/>
    <property type="project" value="ParkinsonsUK-UCL"/>
</dbReference>
<dbReference type="GO" id="GO:2001069">
    <property type="term" value="F:glycogen binding"/>
    <property type="evidence" value="ECO:0000314"/>
    <property type="project" value="GO_Central"/>
</dbReference>
<dbReference type="GO" id="GO:0030247">
    <property type="term" value="F:polysaccharide binding"/>
    <property type="evidence" value="ECO:0000314"/>
    <property type="project" value="ParkinsonsUK-UCL"/>
</dbReference>
<dbReference type="GO" id="GO:2001070">
    <property type="term" value="F:starch binding"/>
    <property type="evidence" value="ECO:0007669"/>
    <property type="project" value="InterPro"/>
</dbReference>
<dbReference type="GO" id="GO:0005980">
    <property type="term" value="P:glycogen catabolic process"/>
    <property type="evidence" value="ECO:0000315"/>
    <property type="project" value="GO_Central"/>
</dbReference>
<dbReference type="GO" id="GO:0061723">
    <property type="term" value="P:glycophagy"/>
    <property type="evidence" value="ECO:0000315"/>
    <property type="project" value="GO_Central"/>
</dbReference>
<dbReference type="GO" id="GO:0046907">
    <property type="term" value="P:intracellular transport"/>
    <property type="evidence" value="ECO:0000316"/>
    <property type="project" value="ParkinsonsUK-UCL"/>
</dbReference>
<dbReference type="GO" id="GO:0061753">
    <property type="term" value="P:substrate localization to autophagosome"/>
    <property type="evidence" value="ECO:0007669"/>
    <property type="project" value="Ensembl"/>
</dbReference>
<dbReference type="CDD" id="cd05813">
    <property type="entry name" value="CBM20_genethonin_1"/>
    <property type="match status" value="1"/>
</dbReference>
<dbReference type="FunFam" id="2.60.40.10:FF:000552">
    <property type="entry name" value="Related to glucoamylase"/>
    <property type="match status" value="1"/>
</dbReference>
<dbReference type="Gene3D" id="2.60.40.10">
    <property type="entry name" value="Immunoglobulins"/>
    <property type="match status" value="1"/>
</dbReference>
<dbReference type="InterPro" id="IPR013784">
    <property type="entry name" value="Carb-bd-like_fold"/>
</dbReference>
<dbReference type="InterPro" id="IPR002044">
    <property type="entry name" value="CBM20"/>
</dbReference>
<dbReference type="InterPro" id="IPR034838">
    <property type="entry name" value="CBM20_genethonin_1"/>
</dbReference>
<dbReference type="InterPro" id="IPR013783">
    <property type="entry name" value="Ig-like_fold"/>
</dbReference>
<dbReference type="PANTHER" id="PTHR15048">
    <property type="entry name" value="STARCH-BINDING DOMAIN-CONTAINING PROTEIN 1"/>
    <property type="match status" value="1"/>
</dbReference>
<dbReference type="PANTHER" id="PTHR15048:SF0">
    <property type="entry name" value="STARCH-BINDING DOMAIN-CONTAINING PROTEIN 1"/>
    <property type="match status" value="1"/>
</dbReference>
<dbReference type="Pfam" id="PF00686">
    <property type="entry name" value="CBM_20"/>
    <property type="match status" value="1"/>
</dbReference>
<dbReference type="SMART" id="SM01065">
    <property type="entry name" value="CBM_2"/>
    <property type="match status" value="1"/>
</dbReference>
<dbReference type="SUPFAM" id="SSF49452">
    <property type="entry name" value="Starch-binding domain-like"/>
    <property type="match status" value="1"/>
</dbReference>
<dbReference type="PROSITE" id="PS51166">
    <property type="entry name" value="CBM20"/>
    <property type="match status" value="1"/>
</dbReference>
<sequence>MGAVWSALLVGGGLAGALFVWLLRGGPGDTGKDGDAEQEKDAPLGGAAIPGGHQSGSSGLSPGPSGQELVTKPEHLQESNGHLISKTKDLGKLQAASWRLQNPSREVCDNSREHVPSGQFPDTEAPATSETSNSRSYSEVSRNESLESPMGEWGFQKGQEISAKAATCFAEKLPSSNLLKNRAKEEMSLSDLNSQDRVDHEEWEMVPRHSSWGDVGVGGSLKAPVLNLNQGMDNGRSTLVEARGQQVHGKMERVAVMPAGSQQVSVRFQVHYVTSTDVQFIAVTGDHECLGRWNTYIPLHYNKDGFWSHSIFLPADTVVEWKFVLVENGGVTRWEECSNRFLETGHEDKVVHAWWGIH</sequence>
<name>STBD1_HUMAN</name>
<feature type="chain" id="PRO_0000087476" description="Starch-binding domain-containing protein 1">
    <location>
        <begin position="1"/>
        <end position="358"/>
    </location>
</feature>
<feature type="topological domain" description="Extracellular" evidence="3">
    <location>
        <begin position="1"/>
        <end position="6"/>
    </location>
</feature>
<feature type="transmembrane region" description="Helical" evidence="3">
    <location>
        <begin position="7"/>
        <end position="23"/>
    </location>
</feature>
<feature type="topological domain" description="Cytoplasmic" evidence="3">
    <location>
        <begin position="24"/>
        <end position="358"/>
    </location>
</feature>
<feature type="domain" description="CBM20" evidence="4">
    <location>
        <begin position="258"/>
        <end position="357"/>
    </location>
</feature>
<feature type="region of interest" description="Disordered" evidence="5">
    <location>
        <begin position="30"/>
        <end position="70"/>
    </location>
</feature>
<feature type="region of interest" description="Disordered" evidence="5">
    <location>
        <begin position="104"/>
        <end position="151"/>
    </location>
</feature>
<feature type="short sequence motif" description="LIR" evidence="12">
    <location>
        <begin position="200"/>
        <end position="206"/>
    </location>
</feature>
<feature type="compositionally biased region" description="Basic and acidic residues" evidence="5">
    <location>
        <begin position="30"/>
        <end position="42"/>
    </location>
</feature>
<feature type="compositionally biased region" description="Low complexity" evidence="5">
    <location>
        <begin position="50"/>
        <end position="66"/>
    </location>
</feature>
<feature type="compositionally biased region" description="Basic and acidic residues" evidence="5">
    <location>
        <begin position="106"/>
        <end position="115"/>
    </location>
</feature>
<feature type="compositionally biased region" description="Polar residues" evidence="5">
    <location>
        <begin position="126"/>
        <end position="140"/>
    </location>
</feature>
<feature type="modified residue" description="Phosphoserine" evidence="1">
    <location>
        <position position="65"/>
    </location>
</feature>
<feature type="modified residue" description="Phosphoserine" evidence="15">
    <location>
        <position position="117"/>
    </location>
</feature>
<feature type="modified residue" description="Phosphoserine" evidence="14">
    <location>
        <position position="148"/>
    </location>
</feature>
<feature type="modified residue" description="Phosphoserine" evidence="2">
    <location>
        <position position="175"/>
    </location>
</feature>
<feature type="modified residue" description="Phosphoserine" evidence="15">
    <location>
        <position position="188"/>
    </location>
</feature>
<feature type="modified residue" description="Phosphoserine" evidence="15">
    <location>
        <position position="194"/>
    </location>
</feature>
<feature type="modified residue" description="Phosphoserine" evidence="15">
    <location>
        <position position="210"/>
    </location>
</feature>
<feature type="modified residue" description="Phosphoserine" evidence="15">
    <location>
        <position position="211"/>
    </location>
</feature>
<feature type="modified residue" description="Phosphoserine" evidence="15">
    <location>
        <position position="220"/>
    </location>
</feature>
<feature type="mutagenesis site" description="Abolishes interaction with GABARAPL1." evidence="7">
    <original>W</original>
    <variation>A</variation>
    <location>
        <position position="203"/>
    </location>
</feature>
<feature type="mutagenesis site" description="Abolishes interaction with GABARAPL1." evidence="7">
    <original>V</original>
    <variation>A</variation>
    <location>
        <position position="206"/>
    </location>
</feature>
<feature type="mutagenesis site" description="Abolishes GYS2- and glycogen-binding, and leads to rapid degradation." evidence="6 8">
    <original>W</original>
    <variation>G</variation>
    <variation>L</variation>
    <location>
        <position position="293"/>
    </location>
</feature>
<comment type="function">
    <text evidence="6 7 8">Acts as a cargo receptor for glycogen. Delivers its cargo to an autophagic pathway called glycophagy, resulting in the transport of glycogen to lysosomes.</text>
</comment>
<comment type="subunit">
    <text evidence="6 7 8">Interacts with the ATG8 family proteins GABARAP and GABARAPL1 (PubMed:20810658, PubMed:21893048). Interacts with several glycogen-associated proteins, such as GYS2 (liver glycogen synthase), GDE (glycogen debranching enzyme), GBE1 (glycogen branching enzyme 1) and EPM2A (Laforin) (PubMed:24837458).</text>
</comment>
<comment type="interaction">
    <interactant intactId="EBI-2947137">
        <id>O95210</id>
    </interactant>
    <interactant intactId="EBI-712001">
        <id>O95166</id>
        <label>GABARAP</label>
    </interactant>
    <organismsDiffer>false</organismsDiffer>
    <experiments>8</experiments>
</comment>
<comment type="interaction">
    <interactant intactId="EBI-2947137">
        <id>O95210</id>
    </interactant>
    <interactant intactId="EBI-746969">
        <id>Q9H0R8</id>
        <label>GABARAPL1</label>
    </interactant>
    <organismsDiffer>false</organismsDiffer>
    <experiments>11</experiments>
</comment>
<comment type="interaction">
    <interactant intactId="EBI-2947137">
        <id>O95210</id>
    </interactant>
    <interactant intactId="EBI-720116">
        <id>P60520</id>
        <label>GABARAPL2</label>
    </interactant>
    <organismsDiffer>false</organismsDiffer>
    <experiments>6</experiments>
</comment>
<comment type="interaction">
    <interactant intactId="EBI-2947137">
        <id>O95210</id>
    </interactant>
    <interactant intactId="EBI-749265">
        <id>Q8N6L0</id>
        <label>KASH5</label>
    </interactant>
    <organismsDiffer>false</organismsDiffer>
    <experiments>3</experiments>
</comment>
<comment type="interaction">
    <interactant intactId="EBI-2947137">
        <id>O95210</id>
    </interactant>
    <interactant intactId="EBI-373144">
        <id>Q9GZQ8</id>
        <label>MAP1LC3B</label>
    </interactant>
    <organismsDiffer>false</organismsDiffer>
    <experiments>2</experiments>
</comment>
<comment type="subcellular location">
    <subcellularLocation>
        <location evidence="6 12">Preautophagosomal structure membrane</location>
        <topology evidence="13">Single-pass type III membrane protein</topology>
    </subcellularLocation>
    <subcellularLocation>
        <location evidence="8">Endoplasmic reticulum membrane</location>
        <topology evidence="13">Single-pass type III membrane protein</topology>
    </subcellularLocation>
    <subcellularLocation>
        <location evidence="9">Cell membrane</location>
        <location evidence="9">Sarcolemma</location>
        <location evidence="9">T-tubule</location>
    </subcellularLocation>
    <text evidence="7 9">Also detected near the junctional sarcoplasmic reticulum (PubMed:9794794). Concentrates at perinuclear structures (PubMed:21893048).</text>
</comment>
<comment type="tissue specificity">
    <text evidence="9">Expressed at high level in skeletal and cardiac muscles. Moderately expressed in liver and placenta. No expression is found in pancreas, kidney or lung. Present in skeletal muscle, heart and placenta (at protein level).</text>
</comment>
<comment type="domain">
    <text evidence="7">The LIR motif (LC3-interacting region) is required for the interaction with the ATG8 family protein GABARAPL1.</text>
</comment>
<comment type="domain">
    <text evidence="6 8">The C-terminal CBM20 domain is required for the interaction with glycogen and glycogen-associated proteins.</text>
</comment>
<comment type="PTM">
    <text evidence="8">Ubiquitinated, which leads to proteasomal degradation.</text>
</comment>